<evidence type="ECO:0000255" key="1">
    <source>
        <dbReference type="HAMAP-Rule" id="MF_00362"/>
    </source>
</evidence>
<evidence type="ECO:0000305" key="2"/>
<gene>
    <name evidence="1" type="primary">rplJ</name>
    <name type="ordered locus">DICTH_1258</name>
</gene>
<proteinExistence type="inferred from homology"/>
<protein>
    <recommendedName>
        <fullName evidence="1">Large ribosomal subunit protein uL10</fullName>
    </recommendedName>
    <alternativeName>
        <fullName evidence="2">50S ribosomal protein L10</fullName>
    </alternativeName>
</protein>
<reference key="1">
    <citation type="journal article" date="2014" name="Genome Announc.">
        <title>Complete Genome Sequence of the Extreme Thermophile Dictyoglomus thermophilum H-6-12.</title>
        <authorList>
            <person name="Coil D.A."/>
            <person name="Badger J.H."/>
            <person name="Forberger H.C."/>
            <person name="Riggs F."/>
            <person name="Madupu R."/>
            <person name="Fedorova N."/>
            <person name="Ward N."/>
            <person name="Robb F.T."/>
            <person name="Eisen J.A."/>
        </authorList>
    </citation>
    <scope>NUCLEOTIDE SEQUENCE [LARGE SCALE GENOMIC DNA]</scope>
    <source>
        <strain>ATCC 35947 / DSM 3960 / H-6-12</strain>
    </source>
</reference>
<comment type="function">
    <text evidence="1">Forms part of the ribosomal stalk, playing a central role in the interaction of the ribosome with GTP-bound translation factors.</text>
</comment>
<comment type="subunit">
    <text evidence="1">Part of the ribosomal stalk of the 50S ribosomal subunit. The N-terminus interacts with L11 and the large rRNA to form the base of the stalk. The C-terminus forms an elongated spine to which L12 dimers bind in a sequential fashion forming a multimeric L10(L12)X complex.</text>
</comment>
<comment type="similarity">
    <text evidence="1">Belongs to the universal ribosomal protein uL10 family.</text>
</comment>
<accession>B5YEX8</accession>
<organism>
    <name type="scientific">Dictyoglomus thermophilum (strain ATCC 35947 / DSM 3960 / H-6-12)</name>
    <dbReference type="NCBI Taxonomy" id="309799"/>
    <lineage>
        <taxon>Bacteria</taxon>
        <taxon>Pseudomonadati</taxon>
        <taxon>Dictyoglomota</taxon>
        <taxon>Dictyoglomia</taxon>
        <taxon>Dictyoglomales</taxon>
        <taxon>Dictyoglomaceae</taxon>
        <taxon>Dictyoglomus</taxon>
    </lineage>
</organism>
<dbReference type="EMBL" id="CP001146">
    <property type="protein sequence ID" value="ACI19443.1"/>
    <property type="molecule type" value="Genomic_DNA"/>
</dbReference>
<dbReference type="RefSeq" id="WP_012548075.1">
    <property type="nucleotide sequence ID" value="NC_011297.1"/>
</dbReference>
<dbReference type="SMR" id="B5YEX8"/>
<dbReference type="STRING" id="309799.DICTH_1258"/>
<dbReference type="PaxDb" id="309799-DICTH_1258"/>
<dbReference type="KEGG" id="dth:DICTH_1258"/>
<dbReference type="eggNOG" id="COG0244">
    <property type="taxonomic scope" value="Bacteria"/>
</dbReference>
<dbReference type="HOGENOM" id="CLU_092227_2_0_0"/>
<dbReference type="OrthoDB" id="9808307at2"/>
<dbReference type="Proteomes" id="UP000001733">
    <property type="component" value="Chromosome"/>
</dbReference>
<dbReference type="GO" id="GO:1990904">
    <property type="term" value="C:ribonucleoprotein complex"/>
    <property type="evidence" value="ECO:0007669"/>
    <property type="project" value="UniProtKB-KW"/>
</dbReference>
<dbReference type="GO" id="GO:0005840">
    <property type="term" value="C:ribosome"/>
    <property type="evidence" value="ECO:0007669"/>
    <property type="project" value="UniProtKB-KW"/>
</dbReference>
<dbReference type="GO" id="GO:0070180">
    <property type="term" value="F:large ribosomal subunit rRNA binding"/>
    <property type="evidence" value="ECO:0007669"/>
    <property type="project" value="UniProtKB-UniRule"/>
</dbReference>
<dbReference type="GO" id="GO:0006412">
    <property type="term" value="P:translation"/>
    <property type="evidence" value="ECO:0007669"/>
    <property type="project" value="UniProtKB-UniRule"/>
</dbReference>
<dbReference type="CDD" id="cd05797">
    <property type="entry name" value="Ribosomal_L10"/>
    <property type="match status" value="1"/>
</dbReference>
<dbReference type="Gene3D" id="3.30.70.1730">
    <property type="match status" value="1"/>
</dbReference>
<dbReference type="Gene3D" id="6.10.250.290">
    <property type="match status" value="1"/>
</dbReference>
<dbReference type="HAMAP" id="MF_00362">
    <property type="entry name" value="Ribosomal_uL10"/>
    <property type="match status" value="1"/>
</dbReference>
<dbReference type="InterPro" id="IPR001790">
    <property type="entry name" value="Ribosomal_uL10"/>
</dbReference>
<dbReference type="InterPro" id="IPR043141">
    <property type="entry name" value="Ribosomal_uL10-like_sf"/>
</dbReference>
<dbReference type="InterPro" id="IPR022973">
    <property type="entry name" value="Ribosomal_uL10_bac"/>
</dbReference>
<dbReference type="InterPro" id="IPR047865">
    <property type="entry name" value="Ribosomal_uL10_bac_type"/>
</dbReference>
<dbReference type="NCBIfam" id="NF000955">
    <property type="entry name" value="PRK00099.1-1"/>
    <property type="match status" value="1"/>
</dbReference>
<dbReference type="PANTHER" id="PTHR11560">
    <property type="entry name" value="39S RIBOSOMAL PROTEIN L10, MITOCHONDRIAL"/>
    <property type="match status" value="1"/>
</dbReference>
<dbReference type="Pfam" id="PF00466">
    <property type="entry name" value="Ribosomal_L10"/>
    <property type="match status" value="1"/>
</dbReference>
<dbReference type="SUPFAM" id="SSF160369">
    <property type="entry name" value="Ribosomal protein L10-like"/>
    <property type="match status" value="1"/>
</dbReference>
<sequence length="178" mass="20018">MPKPEKVQKVEELYQKMLNANALIFTEFKGLSVADLTQLRGKIRPLNAEYRVVKNTLALLAIRKIYPDKDLEKFFVGPTAITYCYGDPFGVLKALVDYAKEHELLKFKGGIIEGEVYSADEVKELAKLPPKEVLLSQVVGAISAPLSSLVWSLKWPVNKLVWTLDAIAKEKEKISINQ</sequence>
<keyword id="KW-0687">Ribonucleoprotein</keyword>
<keyword id="KW-0689">Ribosomal protein</keyword>
<keyword id="KW-0694">RNA-binding</keyword>
<keyword id="KW-0699">rRNA-binding</keyword>
<name>RL10_DICT6</name>
<feature type="chain" id="PRO_1000120950" description="Large ribosomal subunit protein uL10">
    <location>
        <begin position="1"/>
        <end position="178"/>
    </location>
</feature>